<reference key="1">
    <citation type="submission" date="2006-01" db="EMBL/GenBank/DDBJ databases">
        <title>Complete sequence of Novosphingobium aromaticivorans DSM 12444.</title>
        <authorList>
            <consortium name="US DOE Joint Genome Institute"/>
            <person name="Copeland A."/>
            <person name="Lucas S."/>
            <person name="Lapidus A."/>
            <person name="Barry K."/>
            <person name="Detter J.C."/>
            <person name="Glavina T."/>
            <person name="Hammon N."/>
            <person name="Israni S."/>
            <person name="Pitluck S."/>
            <person name="Chain P."/>
            <person name="Malfatti S."/>
            <person name="Shin M."/>
            <person name="Vergez L."/>
            <person name="Schmutz J."/>
            <person name="Larimer F."/>
            <person name="Land M."/>
            <person name="Kyrpides N."/>
            <person name="Ivanova N."/>
            <person name="Fredrickson J."/>
            <person name="Balkwill D."/>
            <person name="Romine M.F."/>
            <person name="Richardson P."/>
        </authorList>
    </citation>
    <scope>NUCLEOTIDE SEQUENCE [LARGE SCALE GENOMIC DNA]</scope>
    <source>
        <strain>ATCC 700278 / DSM 12444 / CCUG 56034 / CIP 105152 / NBRC 16084 / F199</strain>
    </source>
</reference>
<name>PLSX_NOVAD</name>
<gene>
    <name evidence="1" type="primary">plsX</name>
    <name type="ordered locus">Saro_2367</name>
</gene>
<accession>Q2G5S0</accession>
<keyword id="KW-0963">Cytoplasm</keyword>
<keyword id="KW-0444">Lipid biosynthesis</keyword>
<keyword id="KW-0443">Lipid metabolism</keyword>
<keyword id="KW-0594">Phospholipid biosynthesis</keyword>
<keyword id="KW-1208">Phospholipid metabolism</keyword>
<keyword id="KW-1185">Reference proteome</keyword>
<keyword id="KW-0808">Transferase</keyword>
<comment type="function">
    <text evidence="1">Catalyzes the reversible formation of acyl-phosphate (acyl-PO(4)) from acyl-[acyl-carrier-protein] (acyl-ACP). This enzyme utilizes acyl-ACP as fatty acyl donor, but not acyl-CoA.</text>
</comment>
<comment type="catalytic activity">
    <reaction evidence="1">
        <text>a fatty acyl-[ACP] + phosphate = an acyl phosphate + holo-[ACP]</text>
        <dbReference type="Rhea" id="RHEA:42292"/>
        <dbReference type="Rhea" id="RHEA-COMP:9685"/>
        <dbReference type="Rhea" id="RHEA-COMP:14125"/>
        <dbReference type="ChEBI" id="CHEBI:43474"/>
        <dbReference type="ChEBI" id="CHEBI:59918"/>
        <dbReference type="ChEBI" id="CHEBI:64479"/>
        <dbReference type="ChEBI" id="CHEBI:138651"/>
        <dbReference type="EC" id="2.3.1.274"/>
    </reaction>
</comment>
<comment type="pathway">
    <text evidence="1">Lipid metabolism; phospholipid metabolism.</text>
</comment>
<comment type="subunit">
    <text evidence="1">Homodimer. Probably interacts with PlsY.</text>
</comment>
<comment type="subcellular location">
    <subcellularLocation>
        <location evidence="1">Cytoplasm</location>
    </subcellularLocation>
    <text evidence="1">Associated with the membrane possibly through PlsY.</text>
</comment>
<comment type="similarity">
    <text evidence="1">Belongs to the PlsX family.</text>
</comment>
<dbReference type="EC" id="2.3.1.274" evidence="1"/>
<dbReference type="EMBL" id="CP000248">
    <property type="protein sequence ID" value="ABD26803.1"/>
    <property type="molecule type" value="Genomic_DNA"/>
</dbReference>
<dbReference type="RefSeq" id="WP_011446009.1">
    <property type="nucleotide sequence ID" value="NC_007794.1"/>
</dbReference>
<dbReference type="SMR" id="Q2G5S0"/>
<dbReference type="STRING" id="279238.Saro_2367"/>
<dbReference type="KEGG" id="nar:Saro_2367"/>
<dbReference type="eggNOG" id="COG0416">
    <property type="taxonomic scope" value="Bacteria"/>
</dbReference>
<dbReference type="HOGENOM" id="CLU_039379_1_0_5"/>
<dbReference type="UniPathway" id="UPA00085"/>
<dbReference type="Proteomes" id="UP000009134">
    <property type="component" value="Chromosome"/>
</dbReference>
<dbReference type="GO" id="GO:0005737">
    <property type="term" value="C:cytoplasm"/>
    <property type="evidence" value="ECO:0007669"/>
    <property type="project" value="UniProtKB-SubCell"/>
</dbReference>
<dbReference type="GO" id="GO:0043811">
    <property type="term" value="F:phosphate:acyl-[acyl carrier protein] acyltransferase activity"/>
    <property type="evidence" value="ECO:0007669"/>
    <property type="project" value="UniProtKB-UniRule"/>
</dbReference>
<dbReference type="GO" id="GO:0006633">
    <property type="term" value="P:fatty acid biosynthetic process"/>
    <property type="evidence" value="ECO:0007669"/>
    <property type="project" value="UniProtKB-UniRule"/>
</dbReference>
<dbReference type="GO" id="GO:0008654">
    <property type="term" value="P:phospholipid biosynthetic process"/>
    <property type="evidence" value="ECO:0007669"/>
    <property type="project" value="UniProtKB-KW"/>
</dbReference>
<dbReference type="Gene3D" id="3.40.718.10">
    <property type="entry name" value="Isopropylmalate Dehydrogenase"/>
    <property type="match status" value="1"/>
</dbReference>
<dbReference type="HAMAP" id="MF_00019">
    <property type="entry name" value="PlsX"/>
    <property type="match status" value="1"/>
</dbReference>
<dbReference type="InterPro" id="IPR003664">
    <property type="entry name" value="FA_synthesis"/>
</dbReference>
<dbReference type="InterPro" id="IPR012281">
    <property type="entry name" value="Phospholipid_synth_PlsX-like"/>
</dbReference>
<dbReference type="NCBIfam" id="TIGR00182">
    <property type="entry name" value="plsX"/>
    <property type="match status" value="1"/>
</dbReference>
<dbReference type="PANTHER" id="PTHR30100">
    <property type="entry name" value="FATTY ACID/PHOSPHOLIPID SYNTHESIS PROTEIN PLSX"/>
    <property type="match status" value="1"/>
</dbReference>
<dbReference type="PANTHER" id="PTHR30100:SF1">
    <property type="entry name" value="PHOSPHATE ACYLTRANSFERASE"/>
    <property type="match status" value="1"/>
</dbReference>
<dbReference type="Pfam" id="PF02504">
    <property type="entry name" value="FA_synthesis"/>
    <property type="match status" value="1"/>
</dbReference>
<dbReference type="PIRSF" id="PIRSF002465">
    <property type="entry name" value="Phsphlp_syn_PlsX"/>
    <property type="match status" value="1"/>
</dbReference>
<dbReference type="SUPFAM" id="SSF53659">
    <property type="entry name" value="Isocitrate/Isopropylmalate dehydrogenase-like"/>
    <property type="match status" value="1"/>
</dbReference>
<proteinExistence type="inferred from homology"/>
<organism>
    <name type="scientific">Novosphingobium aromaticivorans (strain ATCC 700278 / DSM 12444 / CCUG 56034 / CIP 105152 / NBRC 16084 / F199)</name>
    <dbReference type="NCBI Taxonomy" id="279238"/>
    <lineage>
        <taxon>Bacteria</taxon>
        <taxon>Pseudomonadati</taxon>
        <taxon>Pseudomonadota</taxon>
        <taxon>Alphaproteobacteria</taxon>
        <taxon>Sphingomonadales</taxon>
        <taxon>Sphingomonadaceae</taxon>
        <taxon>Novosphingobium</taxon>
    </lineage>
</organism>
<sequence length="364" mass="38117">MSLPRIAVDAMGGDEGVRVMVEGAALARRRHDRFKFLLVGDEARIKQALENHPNLRGASEILHAPDIVSGDEKPTQALRRAKTTSMGMAINAVKRGEAGAAVSAGNTGALMAMAKLALRTLPGIDRPALSALLPTLGDNDLVMLDLGANTECDARNLVQFAIMGAAYARIVNGLDAPRVRLLNIGTEETKGTDSLRDAATELKALAGDLALSFDGFTEADKLSRGDVDVVVTDGFSGNIALKSMEGAARFVADLLRRSFSSSLRSKLGFLISRPATELLKHHLDPNNHNGAVFLGLNGIVVKSHGGASALGVANAVAVTARLLEENLTERIKADLARVGAEAIRTSGRSGGKSKSSAAREDGAA</sequence>
<evidence type="ECO:0000255" key="1">
    <source>
        <dbReference type="HAMAP-Rule" id="MF_00019"/>
    </source>
</evidence>
<evidence type="ECO:0000256" key="2">
    <source>
        <dbReference type="SAM" id="MobiDB-lite"/>
    </source>
</evidence>
<protein>
    <recommendedName>
        <fullName evidence="1">Phosphate acyltransferase</fullName>
        <ecNumber evidence="1">2.3.1.274</ecNumber>
    </recommendedName>
    <alternativeName>
        <fullName evidence="1">Acyl-ACP phosphotransacylase</fullName>
    </alternativeName>
    <alternativeName>
        <fullName evidence="1">Acyl-[acyl-carrier-protein]--phosphate acyltransferase</fullName>
    </alternativeName>
    <alternativeName>
        <fullName evidence="1">Phosphate-acyl-ACP acyltransferase</fullName>
    </alternativeName>
</protein>
<feature type="chain" id="PRO_0000329244" description="Phosphate acyltransferase">
    <location>
        <begin position="1"/>
        <end position="364"/>
    </location>
</feature>
<feature type="region of interest" description="Disordered" evidence="2">
    <location>
        <begin position="343"/>
        <end position="364"/>
    </location>
</feature>